<feature type="chain" id="PRO_1000016924" description="Ribose-5-phosphate isomerase A">
    <location>
        <begin position="1"/>
        <end position="224"/>
    </location>
</feature>
<feature type="active site" description="Proton acceptor" evidence="1">
    <location>
        <position position="109"/>
    </location>
</feature>
<feature type="binding site" evidence="1">
    <location>
        <begin position="34"/>
        <end position="37"/>
    </location>
    <ligand>
        <name>substrate</name>
    </ligand>
</feature>
<feature type="binding site" evidence="1">
    <location>
        <begin position="87"/>
        <end position="90"/>
    </location>
    <ligand>
        <name>substrate</name>
    </ligand>
</feature>
<feature type="binding site" evidence="1">
    <location>
        <begin position="100"/>
        <end position="103"/>
    </location>
    <ligand>
        <name>substrate</name>
    </ligand>
</feature>
<feature type="binding site" evidence="1">
    <location>
        <position position="127"/>
    </location>
    <ligand>
        <name>substrate</name>
    </ligand>
</feature>
<name>RPIA_FRATH</name>
<evidence type="ECO:0000255" key="1">
    <source>
        <dbReference type="HAMAP-Rule" id="MF_00170"/>
    </source>
</evidence>
<sequence length="224" mass="24466">MFFNKKNNQDELKKLAATEAAKSITTEITLGVGTGSTVGFLIEELVNYRDKIKTVVSSSEDSTRKLKALGFDVVDLNYAGEIDLYIDGADECNNHKELIKGGGAALTREKICVAAAKKFICIIDESKKVNTLGNFPLPIEVIPMARSYIARQIVKLGGQPVYREQTITDNGNVILDVYNLKIDNPLKLETELNQITGVVTNGIFALKPADTVIMATKDSNIVVL</sequence>
<proteinExistence type="inferred from homology"/>
<accession>Q2A467</accession>
<dbReference type="EC" id="5.3.1.6" evidence="1"/>
<dbReference type="EMBL" id="AM233362">
    <property type="protein sequence ID" value="CAJ79175.1"/>
    <property type="molecule type" value="Genomic_DNA"/>
</dbReference>
<dbReference type="RefSeq" id="WP_003015241.1">
    <property type="nucleotide sequence ID" value="NZ_CP009694.1"/>
</dbReference>
<dbReference type="SMR" id="Q2A467"/>
<dbReference type="KEGG" id="ftl:FTL_0736"/>
<dbReference type="UniPathway" id="UPA00115">
    <property type="reaction ID" value="UER00412"/>
</dbReference>
<dbReference type="Proteomes" id="UP000001944">
    <property type="component" value="Chromosome"/>
</dbReference>
<dbReference type="GO" id="GO:0005829">
    <property type="term" value="C:cytosol"/>
    <property type="evidence" value="ECO:0007669"/>
    <property type="project" value="TreeGrafter"/>
</dbReference>
<dbReference type="GO" id="GO:0004751">
    <property type="term" value="F:ribose-5-phosphate isomerase activity"/>
    <property type="evidence" value="ECO:0007669"/>
    <property type="project" value="UniProtKB-UniRule"/>
</dbReference>
<dbReference type="GO" id="GO:0006014">
    <property type="term" value="P:D-ribose metabolic process"/>
    <property type="evidence" value="ECO:0007669"/>
    <property type="project" value="TreeGrafter"/>
</dbReference>
<dbReference type="GO" id="GO:0009052">
    <property type="term" value="P:pentose-phosphate shunt, non-oxidative branch"/>
    <property type="evidence" value="ECO:0007669"/>
    <property type="project" value="UniProtKB-UniRule"/>
</dbReference>
<dbReference type="CDD" id="cd01398">
    <property type="entry name" value="RPI_A"/>
    <property type="match status" value="1"/>
</dbReference>
<dbReference type="FunFam" id="3.30.70.260:FF:000004">
    <property type="entry name" value="Ribose-5-phosphate isomerase A"/>
    <property type="match status" value="1"/>
</dbReference>
<dbReference type="FunFam" id="3.40.50.1360:FF:000001">
    <property type="entry name" value="Ribose-5-phosphate isomerase A"/>
    <property type="match status" value="1"/>
</dbReference>
<dbReference type="Gene3D" id="3.30.70.260">
    <property type="match status" value="1"/>
</dbReference>
<dbReference type="Gene3D" id="3.40.50.1360">
    <property type="match status" value="1"/>
</dbReference>
<dbReference type="HAMAP" id="MF_00170">
    <property type="entry name" value="Rib_5P_isom_A"/>
    <property type="match status" value="1"/>
</dbReference>
<dbReference type="InterPro" id="IPR037171">
    <property type="entry name" value="NagB/RpiA_transferase-like"/>
</dbReference>
<dbReference type="InterPro" id="IPR020672">
    <property type="entry name" value="Ribose5P_isomerase_typA_subgr"/>
</dbReference>
<dbReference type="InterPro" id="IPR004788">
    <property type="entry name" value="Ribose5P_isomerase_type_A"/>
</dbReference>
<dbReference type="NCBIfam" id="NF001924">
    <property type="entry name" value="PRK00702.1"/>
    <property type="match status" value="1"/>
</dbReference>
<dbReference type="NCBIfam" id="TIGR00021">
    <property type="entry name" value="rpiA"/>
    <property type="match status" value="1"/>
</dbReference>
<dbReference type="PANTHER" id="PTHR11934">
    <property type="entry name" value="RIBOSE-5-PHOSPHATE ISOMERASE"/>
    <property type="match status" value="1"/>
</dbReference>
<dbReference type="PANTHER" id="PTHR11934:SF0">
    <property type="entry name" value="RIBOSE-5-PHOSPHATE ISOMERASE"/>
    <property type="match status" value="1"/>
</dbReference>
<dbReference type="Pfam" id="PF06026">
    <property type="entry name" value="Rib_5-P_isom_A"/>
    <property type="match status" value="1"/>
</dbReference>
<dbReference type="SUPFAM" id="SSF75445">
    <property type="entry name" value="D-ribose-5-phosphate isomerase (RpiA), lid domain"/>
    <property type="match status" value="1"/>
</dbReference>
<dbReference type="SUPFAM" id="SSF100950">
    <property type="entry name" value="NagB/RpiA/CoA transferase-like"/>
    <property type="match status" value="1"/>
</dbReference>
<gene>
    <name evidence="1" type="primary">rpiA</name>
    <name type="ordered locus">FTL_0736</name>
</gene>
<keyword id="KW-0413">Isomerase</keyword>
<keyword id="KW-1185">Reference proteome</keyword>
<comment type="function">
    <text evidence="1">Catalyzes the reversible conversion of ribose-5-phosphate to ribulose 5-phosphate.</text>
</comment>
<comment type="catalytic activity">
    <reaction evidence="1">
        <text>aldehydo-D-ribose 5-phosphate = D-ribulose 5-phosphate</text>
        <dbReference type="Rhea" id="RHEA:14657"/>
        <dbReference type="ChEBI" id="CHEBI:58121"/>
        <dbReference type="ChEBI" id="CHEBI:58273"/>
        <dbReference type="EC" id="5.3.1.6"/>
    </reaction>
</comment>
<comment type="pathway">
    <text evidence="1">Carbohydrate degradation; pentose phosphate pathway; D-ribose 5-phosphate from D-ribulose 5-phosphate (non-oxidative stage): step 1/1.</text>
</comment>
<comment type="subunit">
    <text evidence="1">Homodimer.</text>
</comment>
<comment type="similarity">
    <text evidence="1">Belongs to the ribose 5-phosphate isomerase family.</text>
</comment>
<protein>
    <recommendedName>
        <fullName evidence="1">Ribose-5-phosphate isomerase A</fullName>
        <ecNumber evidence="1">5.3.1.6</ecNumber>
    </recommendedName>
    <alternativeName>
        <fullName evidence="1">Phosphoriboisomerase A</fullName>
        <shortName evidence="1">PRI</shortName>
    </alternativeName>
</protein>
<reference key="1">
    <citation type="submission" date="2006-03" db="EMBL/GenBank/DDBJ databases">
        <title>Complete genome sequence of Francisella tularensis LVS (Live Vaccine Strain).</title>
        <authorList>
            <person name="Chain P."/>
            <person name="Larimer F."/>
            <person name="Land M."/>
            <person name="Stilwagen S."/>
            <person name="Larsson P."/>
            <person name="Bearden S."/>
            <person name="Chu M."/>
            <person name="Oyston P."/>
            <person name="Forsman M."/>
            <person name="Andersson S."/>
            <person name="Lindler L."/>
            <person name="Titball R."/>
            <person name="Garcia E."/>
        </authorList>
    </citation>
    <scope>NUCLEOTIDE SEQUENCE [LARGE SCALE GENOMIC DNA]</scope>
    <source>
        <strain>LVS</strain>
    </source>
</reference>
<organism>
    <name type="scientific">Francisella tularensis subsp. holarctica (strain LVS)</name>
    <dbReference type="NCBI Taxonomy" id="376619"/>
    <lineage>
        <taxon>Bacteria</taxon>
        <taxon>Pseudomonadati</taxon>
        <taxon>Pseudomonadota</taxon>
        <taxon>Gammaproteobacteria</taxon>
        <taxon>Thiotrichales</taxon>
        <taxon>Francisellaceae</taxon>
        <taxon>Francisella</taxon>
    </lineage>
</organism>